<proteinExistence type="evidence at transcript level"/>
<dbReference type="EC" id="1.5.3.-" evidence="2"/>
<dbReference type="EMBL" id="LC107620">
    <property type="protein sequence ID" value="BAV17937.1"/>
    <property type="molecule type" value="mRNA"/>
</dbReference>
<dbReference type="EMBL" id="AP005525">
    <property type="protein sequence ID" value="BAD25914.1"/>
    <property type="status" value="ALT_INIT"/>
    <property type="molecule type" value="Genomic_DNA"/>
</dbReference>
<dbReference type="EMBL" id="AP005580">
    <property type="protein sequence ID" value="BAD25971.1"/>
    <property type="status" value="ALT_INIT"/>
    <property type="molecule type" value="Genomic_DNA"/>
</dbReference>
<dbReference type="EMBL" id="AP008215">
    <property type="protein sequence ID" value="BAF24924.2"/>
    <property type="status" value="ALT_SEQ"/>
    <property type="molecule type" value="Genomic_DNA"/>
</dbReference>
<dbReference type="EMBL" id="AP014965">
    <property type="protein sequence ID" value="BAT07747.1"/>
    <property type="molecule type" value="Genomic_DNA"/>
</dbReference>
<dbReference type="RefSeq" id="XP_015611019.1">
    <property type="nucleotide sequence ID" value="XM_015755533.1"/>
</dbReference>
<dbReference type="SMR" id="A0A0P0XM10"/>
<dbReference type="FunCoup" id="A0A0P0XM10">
    <property type="interactions" value="18"/>
</dbReference>
<dbReference type="STRING" id="39947.A0A0P0XM10"/>
<dbReference type="GlyCosmos" id="A0A0P0XM10">
    <property type="glycosylation" value="3 sites, No reported glycans"/>
</dbReference>
<dbReference type="PaxDb" id="39947-A0A0P0XM10"/>
<dbReference type="EnsemblPlants" id="Os09t0368200-00">
    <property type="protein sequence ID" value="Os09t0368200-00"/>
    <property type="gene ID" value="Os09g0368200"/>
</dbReference>
<dbReference type="Gramene" id="Os09t0368200-00">
    <property type="protein sequence ID" value="Os09t0368200-00"/>
    <property type="gene ID" value="Os09g0368200"/>
</dbReference>
<dbReference type="KEGG" id="dosa:Os09g0368200"/>
<dbReference type="eggNOG" id="KOG0029">
    <property type="taxonomic scope" value="Eukaryota"/>
</dbReference>
<dbReference type="HOGENOM" id="CLU_004498_6_1_1"/>
<dbReference type="InParanoid" id="A0A0P0XM10"/>
<dbReference type="OMA" id="KEWNDYG"/>
<dbReference type="OrthoDB" id="5046242at2759"/>
<dbReference type="PlantReactome" id="R-OSA-1119567">
    <property type="pathway name" value="Beta-alanine biosynthesis I"/>
</dbReference>
<dbReference type="UniPathway" id="UPA00211"/>
<dbReference type="Proteomes" id="UP000000763">
    <property type="component" value="Chromosome 9"/>
</dbReference>
<dbReference type="Proteomes" id="UP000059680">
    <property type="component" value="Chromosome 9"/>
</dbReference>
<dbReference type="GO" id="GO:0048046">
    <property type="term" value="C:apoplast"/>
    <property type="evidence" value="ECO:0007669"/>
    <property type="project" value="UniProtKB-SubCell"/>
</dbReference>
<dbReference type="GO" id="GO:0050660">
    <property type="term" value="F:flavin adenine dinucleotide binding"/>
    <property type="evidence" value="ECO:0007669"/>
    <property type="project" value="UniProtKB-ARBA"/>
</dbReference>
<dbReference type="GO" id="GO:0046592">
    <property type="term" value="F:polyamine oxidase activity"/>
    <property type="evidence" value="ECO:0000318"/>
    <property type="project" value="GO_Central"/>
</dbReference>
<dbReference type="GO" id="GO:0052901">
    <property type="term" value="F:spermine oxidase activity"/>
    <property type="evidence" value="ECO:0007669"/>
    <property type="project" value="UniProtKB-ARBA"/>
</dbReference>
<dbReference type="GO" id="GO:0006598">
    <property type="term" value="P:polyamine catabolic process"/>
    <property type="evidence" value="ECO:0000318"/>
    <property type="project" value="GO_Central"/>
</dbReference>
<dbReference type="GO" id="GO:0046208">
    <property type="term" value="P:spermine catabolic process"/>
    <property type="evidence" value="ECO:0007669"/>
    <property type="project" value="UniProtKB-UniPathway"/>
</dbReference>
<dbReference type="GO" id="GO:1903602">
    <property type="term" value="P:thermospermine catabolic process"/>
    <property type="evidence" value="ECO:0007669"/>
    <property type="project" value="UniProtKB-ARBA"/>
</dbReference>
<dbReference type="FunFam" id="3.90.660.10:FF:000089">
    <property type="match status" value="1"/>
</dbReference>
<dbReference type="FunFam" id="3.50.50.60:FF:000517">
    <property type="entry name" value="Lysine-specific histone demethylase 1"/>
    <property type="match status" value="1"/>
</dbReference>
<dbReference type="FunFam" id="3.90.660.10:FF:000012">
    <property type="entry name" value="Polyamine oxidase 1"/>
    <property type="match status" value="1"/>
</dbReference>
<dbReference type="Gene3D" id="3.90.660.10">
    <property type="match status" value="1"/>
</dbReference>
<dbReference type="Gene3D" id="3.50.50.60">
    <property type="entry name" value="FAD/NAD(P)-binding domain"/>
    <property type="match status" value="1"/>
</dbReference>
<dbReference type="InterPro" id="IPR002937">
    <property type="entry name" value="Amino_oxidase"/>
</dbReference>
<dbReference type="InterPro" id="IPR036188">
    <property type="entry name" value="FAD/NAD-bd_sf"/>
</dbReference>
<dbReference type="InterPro" id="IPR001613">
    <property type="entry name" value="Flavin_amine_oxidase"/>
</dbReference>
<dbReference type="InterPro" id="IPR050281">
    <property type="entry name" value="Flavin_monoamine_oxidase"/>
</dbReference>
<dbReference type="PANTHER" id="PTHR10742:SF313">
    <property type="entry name" value="AMINE OXIDASE"/>
    <property type="match status" value="1"/>
</dbReference>
<dbReference type="PANTHER" id="PTHR10742">
    <property type="entry name" value="FLAVIN MONOAMINE OXIDASE"/>
    <property type="match status" value="1"/>
</dbReference>
<dbReference type="Pfam" id="PF01593">
    <property type="entry name" value="Amino_oxidase"/>
    <property type="match status" value="1"/>
</dbReference>
<dbReference type="PRINTS" id="PR00757">
    <property type="entry name" value="AMINEOXDASEF"/>
</dbReference>
<dbReference type="SUPFAM" id="SSF54373">
    <property type="entry name" value="FAD-linked reductases, C-terminal domain"/>
    <property type="match status" value="1"/>
</dbReference>
<dbReference type="SUPFAM" id="SSF51905">
    <property type="entry name" value="FAD/NAD(P)-binding domain"/>
    <property type="match status" value="1"/>
</dbReference>
<reference key="1">
    <citation type="journal article" date="2017" name="Plant Signal. Behav.">
        <title>Identification of the actual coding region for polyamine oxidase 6 from rice (OsPAO6) and its partial characterization.</title>
        <authorList>
            <person name="Sagor G.H.M."/>
            <person name="Kusano T."/>
            <person name="Berberich T."/>
        </authorList>
    </citation>
    <scope>NUCLEOTIDE SEQUENCE [MRNA]</scope>
    <scope>SUBCELLULAR LOCATION</scope>
    <scope>INDUCTION BY JASMONATE</scope>
    <source>
        <strain>cv. Nipponbare</strain>
    </source>
</reference>
<reference key="2">
    <citation type="journal article" date="2005" name="Nature">
        <title>The map-based sequence of the rice genome.</title>
        <authorList>
            <consortium name="International rice genome sequencing project (IRGSP)"/>
        </authorList>
    </citation>
    <scope>NUCLEOTIDE SEQUENCE [LARGE SCALE GENOMIC DNA]</scope>
    <source>
        <strain>cv. Nipponbare</strain>
    </source>
</reference>
<reference key="3">
    <citation type="journal article" date="2008" name="Nucleic Acids Res.">
        <title>The rice annotation project database (RAP-DB): 2008 update.</title>
        <authorList>
            <consortium name="The rice annotation project (RAP)"/>
        </authorList>
    </citation>
    <scope>GENOME REANNOTATION</scope>
    <source>
        <strain>cv. Nipponbare</strain>
    </source>
</reference>
<reference key="4">
    <citation type="journal article" date="2013" name="Rice">
        <title>Improvement of the Oryza sativa Nipponbare reference genome using next generation sequence and optical map data.</title>
        <authorList>
            <person name="Kawahara Y."/>
            <person name="de la Bastide M."/>
            <person name="Hamilton J.P."/>
            <person name="Kanamori H."/>
            <person name="McCombie W.R."/>
            <person name="Ouyang S."/>
            <person name="Schwartz D.C."/>
            <person name="Tanaka T."/>
            <person name="Wu J."/>
            <person name="Zhou S."/>
            <person name="Childs K.L."/>
            <person name="Davidson R.M."/>
            <person name="Lin H."/>
            <person name="Quesada-Ocampo L."/>
            <person name="Vaillancourt B."/>
            <person name="Sakai H."/>
            <person name="Lee S.S."/>
            <person name="Kim J."/>
            <person name="Numa H."/>
            <person name="Itoh T."/>
            <person name="Buell C.R."/>
            <person name="Matsumoto T."/>
        </authorList>
    </citation>
    <scope>GENOME REANNOTATION</scope>
    <source>
        <strain>cv. Nipponbare</strain>
    </source>
</reference>
<reference key="5">
    <citation type="journal article" date="2010" name="J. Exp. Bot.">
        <title>Putrescine differently influences the effect of salt stress on polyamine metabolism and ethylene synthesis in rice cultivars differing in salt resistance.</title>
        <authorList>
            <person name="Quinet M."/>
            <person name="Ndayiragije A."/>
            <person name="Lefevre I."/>
            <person name="Lambillotte B."/>
            <person name="Dupont-Gillain C.C."/>
            <person name="Lutts S."/>
        </authorList>
    </citation>
    <scope>INDUCTION BY SALT STRESS</scope>
</reference>
<gene>
    <name evidence="8" type="primary">PAO6</name>
    <name evidence="7" type="synonym">PAOB</name>
    <name evidence="12" type="ordered locus">Os09g0368200</name>
    <name evidence="9" type="ordered locus">LOC_Os09g20260</name>
    <name evidence="11" type="ORF">OJ1759_F09.3</name>
    <name evidence="10" type="ORF">P0564H06.9</name>
</gene>
<keyword id="KW-0052">Apoplast</keyword>
<keyword id="KW-0274">FAD</keyword>
<keyword id="KW-0285">Flavoprotein</keyword>
<keyword id="KW-0325">Glycoprotein</keyword>
<keyword id="KW-0560">Oxidoreductase</keyword>
<keyword id="KW-1185">Reference proteome</keyword>
<keyword id="KW-0964">Secreted</keyword>
<keyword id="KW-0732">Signal</keyword>
<protein>
    <recommendedName>
        <fullName evidence="8">Polyamine oxidase 6</fullName>
        <shortName evidence="8">OsPAO6</shortName>
        <ecNumber evidence="2">1.5.3.-</ecNumber>
    </recommendedName>
    <alternativeName>
        <fullName>Polyamine oxidase B</fullName>
    </alternativeName>
</protein>
<name>PAO6_ORYSJ</name>
<feature type="signal peptide" evidence="3">
    <location>
        <begin position="1"/>
        <end position="27"/>
    </location>
</feature>
<feature type="chain" id="PRO_5013461417" description="Polyamine oxidase 6">
    <location>
        <begin position="28"/>
        <end position="496"/>
    </location>
</feature>
<feature type="binding site" evidence="1">
    <location>
        <position position="61"/>
    </location>
    <ligand>
        <name>FAD</name>
        <dbReference type="ChEBI" id="CHEBI:57692"/>
    </ligand>
</feature>
<feature type="binding site" evidence="1">
    <location>
        <position position="69"/>
    </location>
    <ligand>
        <name>FAD</name>
        <dbReference type="ChEBI" id="CHEBI:57692"/>
    </ligand>
</feature>
<feature type="binding site" evidence="1">
    <location>
        <position position="261"/>
    </location>
    <ligand>
        <name>FAD</name>
        <dbReference type="ChEBI" id="CHEBI:57692"/>
    </ligand>
</feature>
<feature type="binding site" evidence="1">
    <location>
        <position position="454"/>
    </location>
    <ligand>
        <name>FAD</name>
        <dbReference type="ChEBI" id="CHEBI:57692"/>
    </ligand>
</feature>
<feature type="glycosylation site" description="N-linked (GlcNAc...) asparagine" evidence="4">
    <location>
        <position position="103"/>
    </location>
</feature>
<feature type="glycosylation site" description="N-linked (GlcNAc...) asparagine" evidence="4">
    <location>
        <position position="150"/>
    </location>
</feature>
<feature type="glycosylation site" description="N-linked (GlcNAc...) asparagine" evidence="4">
    <location>
        <position position="278"/>
    </location>
</feature>
<accession>A0A0P0XM10</accession>
<accession>Q0J291</accession>
<accession>Q6H5M8</accession>
<sequence>MTKPTTMAIFLVLALSIAQLLPSLVAGTGRPRVIIVGAGISGISAGKRIWEAGIADVLILEATDRIGGRMHKQSFAGVNVEIGANWVEGVNGEKKNPIWPIVNSTLKLRSFRSDFDSLAQNVYKDGGLCDEAYVQKRMDRADEVDKSGENLSATLHPSGRDDMSILSMQRLNDHLPNGPSSPVDMAVDYFTYDYEFAEPPRVTSLQNTVPLPTFTDFGDDTYFVADQRGYESVVHHLAGQYLNADKSGNIADARLKLNKVVREISYSSTGVTVKTEDNSTYQADYVMVSASLGVLQSDLIQFKPQLPSWKILAIYQFDMAVYTKIFVKFPKKFWPEGAGREFFLYASTRRGYYGVWQEFEKQYPDANVLLVTVTDEESRRIEQQPDSQTKAEIMEVVRCMFPDEDVPDATDILVPRWWSDRFFRGSFSNWPIGVSRYEYDQLRAPVGRVYFTGEHTSERYNGYVHGAYLAGIDSAEILINCAQKKMCKYNVGGKHG</sequence>
<comment type="function">
    <text evidence="2">Flavoenzyme involved in polyamine back-conversion (By similarity). Catalyzes the oxidation of the secondary amino group of polyamines, such as spermine and spermidine (By similarity).</text>
</comment>
<comment type="cofactor">
    <cofactor evidence="2">
        <name>FAD</name>
        <dbReference type="ChEBI" id="CHEBI:57692"/>
    </cofactor>
    <text evidence="2">Binds 1 FAD per subunit.</text>
</comment>
<comment type="pathway">
    <text evidence="9">Amine and polyamine degradation; spermine degradation.</text>
</comment>
<comment type="subcellular location">
    <subcellularLocation>
        <location evidence="6">Secreted</location>
        <location evidence="6">Extracellular space</location>
        <location evidence="6">Apoplast</location>
    </subcellularLocation>
</comment>
<comment type="induction">
    <text evidence="5 6">Induced by salt stress in shoots and roots (PubMed:20472577). Induced by treatment with jasmonate (PubMed:28786735).</text>
</comment>
<comment type="similarity">
    <text evidence="9">Belongs to the flavin monoamine oxidase family.</text>
</comment>
<comment type="sequence caution" evidence="9">
    <conflict type="erroneous initiation">
        <sequence resource="EMBL-CDS" id="BAD25914"/>
    </conflict>
    <text>Truncated N-terminus.</text>
</comment>
<comment type="sequence caution" evidence="9">
    <conflict type="erroneous initiation">
        <sequence resource="EMBL-CDS" id="BAD25971"/>
    </conflict>
    <text>Truncated N-terminus.</text>
</comment>
<comment type="sequence caution" evidence="9">
    <conflict type="erroneous gene model prediction">
        <sequence resource="EMBL-CDS" id="BAF24924"/>
    </conflict>
</comment>
<evidence type="ECO:0000250" key="1">
    <source>
        <dbReference type="UniProtKB" id="O64411"/>
    </source>
</evidence>
<evidence type="ECO:0000250" key="2">
    <source>
        <dbReference type="UniProtKB" id="Q0J290"/>
    </source>
</evidence>
<evidence type="ECO:0000255" key="3"/>
<evidence type="ECO:0000255" key="4">
    <source>
        <dbReference type="PROSITE-ProRule" id="PRU00498"/>
    </source>
</evidence>
<evidence type="ECO:0000269" key="5">
    <source>
    </source>
</evidence>
<evidence type="ECO:0000269" key="6">
    <source>
    </source>
</evidence>
<evidence type="ECO:0000303" key="7">
    <source>
    </source>
</evidence>
<evidence type="ECO:0000303" key="8">
    <source>
    </source>
</evidence>
<evidence type="ECO:0000305" key="9"/>
<evidence type="ECO:0000312" key="10">
    <source>
        <dbReference type="EMBL" id="BAD25914.1"/>
    </source>
</evidence>
<evidence type="ECO:0000312" key="11">
    <source>
        <dbReference type="EMBL" id="BAD25971.1"/>
    </source>
</evidence>
<evidence type="ECO:0000312" key="12">
    <source>
        <dbReference type="EMBL" id="BAT07747.1"/>
    </source>
</evidence>
<organism>
    <name type="scientific">Oryza sativa subsp. japonica</name>
    <name type="common">Rice</name>
    <dbReference type="NCBI Taxonomy" id="39947"/>
    <lineage>
        <taxon>Eukaryota</taxon>
        <taxon>Viridiplantae</taxon>
        <taxon>Streptophyta</taxon>
        <taxon>Embryophyta</taxon>
        <taxon>Tracheophyta</taxon>
        <taxon>Spermatophyta</taxon>
        <taxon>Magnoliopsida</taxon>
        <taxon>Liliopsida</taxon>
        <taxon>Poales</taxon>
        <taxon>Poaceae</taxon>
        <taxon>BOP clade</taxon>
        <taxon>Oryzoideae</taxon>
        <taxon>Oryzeae</taxon>
        <taxon>Oryzinae</taxon>
        <taxon>Oryza</taxon>
        <taxon>Oryza sativa</taxon>
    </lineage>
</organism>